<accession>A8GHQ9</accession>
<evidence type="ECO:0000255" key="1">
    <source>
        <dbReference type="HAMAP-Rule" id="MF_01423"/>
    </source>
</evidence>
<feature type="chain" id="PRO_1000068505" description="Multidrug resistance protein MdtB">
    <location>
        <begin position="1"/>
        <end position="1039"/>
    </location>
</feature>
<feature type="transmembrane region" description="Helical" evidence="1">
    <location>
        <begin position="16"/>
        <end position="36"/>
    </location>
</feature>
<feature type="transmembrane region" description="Helical" evidence="1">
    <location>
        <begin position="342"/>
        <end position="362"/>
    </location>
</feature>
<feature type="transmembrane region" description="Helical" evidence="1">
    <location>
        <begin position="373"/>
        <end position="393"/>
    </location>
</feature>
<feature type="transmembrane region" description="Helical" evidence="1">
    <location>
        <begin position="396"/>
        <end position="416"/>
    </location>
</feature>
<feature type="transmembrane region" description="Helical" evidence="1">
    <location>
        <begin position="440"/>
        <end position="460"/>
    </location>
</feature>
<feature type="transmembrane region" description="Helical" evidence="1">
    <location>
        <begin position="472"/>
        <end position="492"/>
    </location>
</feature>
<feature type="transmembrane region" description="Helical" evidence="1">
    <location>
        <begin position="537"/>
        <end position="557"/>
    </location>
</feature>
<feature type="transmembrane region" description="Helical" evidence="1">
    <location>
        <begin position="863"/>
        <end position="883"/>
    </location>
</feature>
<feature type="transmembrane region" description="Helical" evidence="1">
    <location>
        <begin position="888"/>
        <end position="908"/>
    </location>
</feature>
<feature type="transmembrane region" description="Helical" evidence="1">
    <location>
        <begin position="911"/>
        <end position="931"/>
    </location>
</feature>
<feature type="transmembrane region" description="Helical" evidence="1">
    <location>
        <begin position="968"/>
        <end position="988"/>
    </location>
</feature>
<feature type="transmembrane region" description="Helical" evidence="1">
    <location>
        <begin position="1002"/>
        <end position="1022"/>
    </location>
</feature>
<protein>
    <recommendedName>
        <fullName evidence="1">Multidrug resistance protein MdtB</fullName>
    </recommendedName>
    <alternativeName>
        <fullName evidence="1">Multidrug transporter MdtB</fullName>
    </alternativeName>
</protein>
<dbReference type="EMBL" id="CP000826">
    <property type="protein sequence ID" value="ABV42649.1"/>
    <property type="molecule type" value="Genomic_DNA"/>
</dbReference>
<dbReference type="SMR" id="A8GHQ9"/>
<dbReference type="STRING" id="399741.Spro_3553"/>
<dbReference type="KEGG" id="spe:Spro_3553"/>
<dbReference type="eggNOG" id="COG0841">
    <property type="taxonomic scope" value="Bacteria"/>
</dbReference>
<dbReference type="HOGENOM" id="CLU_002755_1_2_6"/>
<dbReference type="OrthoDB" id="9757904at2"/>
<dbReference type="GO" id="GO:0005886">
    <property type="term" value="C:plasma membrane"/>
    <property type="evidence" value="ECO:0007669"/>
    <property type="project" value="UniProtKB-SubCell"/>
</dbReference>
<dbReference type="GO" id="GO:0042910">
    <property type="term" value="F:xenobiotic transmembrane transporter activity"/>
    <property type="evidence" value="ECO:0007669"/>
    <property type="project" value="TreeGrafter"/>
</dbReference>
<dbReference type="FunFam" id="1.20.1640.10:FF:000001">
    <property type="entry name" value="Efflux pump membrane transporter"/>
    <property type="match status" value="1"/>
</dbReference>
<dbReference type="FunFam" id="3.30.70.1430:FF:000001">
    <property type="entry name" value="Efflux pump membrane transporter"/>
    <property type="match status" value="1"/>
</dbReference>
<dbReference type="Gene3D" id="3.30.70.1430">
    <property type="entry name" value="Multidrug efflux transporter AcrB pore domain"/>
    <property type="match status" value="2"/>
</dbReference>
<dbReference type="Gene3D" id="3.30.70.1440">
    <property type="entry name" value="Multidrug efflux transporter AcrB pore domain"/>
    <property type="match status" value="1"/>
</dbReference>
<dbReference type="Gene3D" id="3.30.70.1320">
    <property type="entry name" value="Multidrug efflux transporter AcrB pore domain like"/>
    <property type="match status" value="1"/>
</dbReference>
<dbReference type="Gene3D" id="3.30.2090.10">
    <property type="entry name" value="Multidrug efflux transporter AcrB TolC docking domain, DN and DC subdomains"/>
    <property type="match status" value="2"/>
</dbReference>
<dbReference type="Gene3D" id="1.20.1640.10">
    <property type="entry name" value="Multidrug efflux transporter AcrB transmembrane domain"/>
    <property type="match status" value="2"/>
</dbReference>
<dbReference type="HAMAP" id="MF_01423">
    <property type="entry name" value="MdtB"/>
    <property type="match status" value="1"/>
</dbReference>
<dbReference type="InterPro" id="IPR027463">
    <property type="entry name" value="AcrB_DN_DC_subdom"/>
</dbReference>
<dbReference type="InterPro" id="IPR001036">
    <property type="entry name" value="Acrflvin-R"/>
</dbReference>
<dbReference type="InterPro" id="IPR022831">
    <property type="entry name" value="Multidrug-R_MdtB"/>
</dbReference>
<dbReference type="NCBIfam" id="NF007798">
    <property type="entry name" value="PRK10503.1"/>
    <property type="match status" value="1"/>
</dbReference>
<dbReference type="NCBIfam" id="NF033617">
    <property type="entry name" value="RND_permease_2"/>
    <property type="match status" value="1"/>
</dbReference>
<dbReference type="PANTHER" id="PTHR32063">
    <property type="match status" value="1"/>
</dbReference>
<dbReference type="PANTHER" id="PTHR32063:SF21">
    <property type="entry name" value="MULTIDRUG RESISTANCE PROTEIN MDTB"/>
    <property type="match status" value="1"/>
</dbReference>
<dbReference type="Pfam" id="PF00873">
    <property type="entry name" value="ACR_tran"/>
    <property type="match status" value="1"/>
</dbReference>
<dbReference type="PRINTS" id="PR00702">
    <property type="entry name" value="ACRIFLAVINRP"/>
</dbReference>
<dbReference type="SUPFAM" id="SSF82693">
    <property type="entry name" value="Multidrug efflux transporter AcrB pore domain, PN1, PN2, PC1 and PC2 subdomains"/>
    <property type="match status" value="3"/>
</dbReference>
<dbReference type="SUPFAM" id="SSF82714">
    <property type="entry name" value="Multidrug efflux transporter AcrB TolC docking domain, DN and DC subdomains"/>
    <property type="match status" value="2"/>
</dbReference>
<dbReference type="SUPFAM" id="SSF82866">
    <property type="entry name" value="Multidrug efflux transporter AcrB transmembrane domain"/>
    <property type="match status" value="2"/>
</dbReference>
<name>MDTB_SERP5</name>
<gene>
    <name evidence="1" type="primary">mdtB</name>
    <name type="ordered locus">Spro_3553</name>
</gene>
<sequence>MQVMPPNPGGGPSRLFILRPVATTLLMVAILLAGIIGYRALPVSALPEVDYPTIQVVTLYPGASPDVVTSAITAPLERQFGQMSGLKQMASQSSGGASVVTLQFQLELPLDVAEQEVQAAINSATNLLPSDLPYPPIYSKVNPADPPILTLAVTSSAMPMTQVEDMVETRVAQKISQVTGVGLVTISGGQRPAVRVKLNAAAVAAYGLDSETIRTAISNANVNSAKGSLDGPTRSVTLSANDQMKSADDYRQLIVAYQNGAAIRLQDIATIEQGAENTRLAAWANKQPAIVLNIQRQPGVNVITTADSIREMLPQLIKSLPKSVDVKVLTDRTTTIRASVSDVQFELLLAVALVVMVIYVFLRNVPATIIPSVAVPLSLIGTFAAMYFLGFSINNLTLMALTIATGFVVDDAIVVIENISRYIEKGEKPLDAALKGAGEIGFTIISLTFSLVAVLIPLLFMGDIVGRLFREFAVTLAVAILISAVVSLTLTPMMCARMLSHESLRKQNRFSAASERFFDRVIARYGKWLKTVLNHPWLTLGVAFSTLLLTVLLYLLIPKGFFPVQDNGIIQGTLEAPQSVSFSNMAERQQQVAAEILKDPAVESLTSFVGVDGTNATLNSGRLQINLKPLSERSERIPAIITRLQQMSTQFPGVKLYLQPVQDLTIDTQVSRTQYQFTLQAMSLDDLSLWVPKLMAELQQTPQLADVTSNWQDQGLVAYVNVDRDSASRLGISMSDVDNALYNAFGQRLISTIYTQANQYRVVLEHDVSTTPGLAALNDIRLTSSNGTIVPLSTIAKIEQRFGPLSVNHLDQFPAATISFNVAGNYSLGEAVDAITLAEKNLNLPKDITTQFQGATLAFQAALGGTLWLILAAVVAMYIVLGVLYESFIHPVTILSTLPTAGVGALLALMMAGSELDVIAIIGIILLIGIVKKNAIMMIDFALAAEREQGMTPYDAIYQACLLRFRPILMTTLAALLGALPLMLSTGVGAELRHPLGVCMVGGLVMSQILTLFTTPVIYLLFDKLARNTRRQPDAQELP</sequence>
<comment type="subunit">
    <text evidence="1">Part of a tripartite efflux system composed of MdtA, MdtB and MdtC. MdtB forms a heteromultimer with MdtC.</text>
</comment>
<comment type="subcellular location">
    <subcellularLocation>
        <location evidence="1">Cell inner membrane</location>
        <topology evidence="1">Multi-pass membrane protein</topology>
    </subcellularLocation>
</comment>
<comment type="similarity">
    <text evidence="1">Belongs to the resistance-nodulation-cell division (RND) (TC 2.A.6) family. MdtB subfamily.</text>
</comment>
<keyword id="KW-0997">Cell inner membrane</keyword>
<keyword id="KW-1003">Cell membrane</keyword>
<keyword id="KW-0472">Membrane</keyword>
<keyword id="KW-0812">Transmembrane</keyword>
<keyword id="KW-1133">Transmembrane helix</keyword>
<keyword id="KW-0813">Transport</keyword>
<organism>
    <name type="scientific">Serratia proteamaculans (strain 568)</name>
    <dbReference type="NCBI Taxonomy" id="399741"/>
    <lineage>
        <taxon>Bacteria</taxon>
        <taxon>Pseudomonadati</taxon>
        <taxon>Pseudomonadota</taxon>
        <taxon>Gammaproteobacteria</taxon>
        <taxon>Enterobacterales</taxon>
        <taxon>Yersiniaceae</taxon>
        <taxon>Serratia</taxon>
    </lineage>
</organism>
<reference key="1">
    <citation type="submission" date="2007-09" db="EMBL/GenBank/DDBJ databases">
        <title>Complete sequence of chromosome of Serratia proteamaculans 568.</title>
        <authorList>
            <consortium name="US DOE Joint Genome Institute"/>
            <person name="Copeland A."/>
            <person name="Lucas S."/>
            <person name="Lapidus A."/>
            <person name="Barry K."/>
            <person name="Glavina del Rio T."/>
            <person name="Dalin E."/>
            <person name="Tice H."/>
            <person name="Pitluck S."/>
            <person name="Chain P."/>
            <person name="Malfatti S."/>
            <person name="Shin M."/>
            <person name="Vergez L."/>
            <person name="Schmutz J."/>
            <person name="Larimer F."/>
            <person name="Land M."/>
            <person name="Hauser L."/>
            <person name="Kyrpides N."/>
            <person name="Kim E."/>
            <person name="Taghavi S."/>
            <person name="Newman L."/>
            <person name="Vangronsveld J."/>
            <person name="van der Lelie D."/>
            <person name="Richardson P."/>
        </authorList>
    </citation>
    <scope>NUCLEOTIDE SEQUENCE [LARGE SCALE GENOMIC DNA]</scope>
    <source>
        <strain>568</strain>
    </source>
</reference>
<proteinExistence type="inferred from homology"/>